<accession>P55979</accession>
<evidence type="ECO:0000250" key="1">
    <source>
        <dbReference type="UniProtKB" id="P0AE52"/>
    </source>
</evidence>
<evidence type="ECO:0000250" key="2">
    <source>
        <dbReference type="UniProtKB" id="Q8P9V9"/>
    </source>
</evidence>
<evidence type="ECO:0000255" key="3">
    <source>
        <dbReference type="PROSITE-ProRule" id="PRU00691"/>
    </source>
</evidence>
<evidence type="ECO:0000305" key="4"/>
<organism>
    <name type="scientific">Helicobacter pylori (strain ATCC 700392 / 26695)</name>
    <name type="common">Campylobacter pylori</name>
    <dbReference type="NCBI Taxonomy" id="85962"/>
    <lineage>
        <taxon>Bacteria</taxon>
        <taxon>Pseudomonadati</taxon>
        <taxon>Campylobacterota</taxon>
        <taxon>Epsilonproteobacteria</taxon>
        <taxon>Campylobacterales</taxon>
        <taxon>Helicobacteraceae</taxon>
        <taxon>Helicobacter</taxon>
    </lineage>
</organism>
<reference key="1">
    <citation type="journal article" date="1997" name="Nature">
        <title>The complete genome sequence of the gastric pathogen Helicobacter pylori.</title>
        <authorList>
            <person name="Tomb J.-F."/>
            <person name="White O."/>
            <person name="Kerlavage A.R."/>
            <person name="Clayton R.A."/>
            <person name="Sutton G.G."/>
            <person name="Fleischmann R.D."/>
            <person name="Ketchum K.A."/>
            <person name="Klenk H.-P."/>
            <person name="Gill S.R."/>
            <person name="Dougherty B.A."/>
            <person name="Nelson K.E."/>
            <person name="Quackenbush J."/>
            <person name="Zhou L."/>
            <person name="Kirkness E.F."/>
            <person name="Peterson S.N."/>
            <person name="Loftus B.J."/>
            <person name="Richardson D.L."/>
            <person name="Dodson R.J."/>
            <person name="Khalak H.G."/>
            <person name="Glodek A."/>
            <person name="McKenney K."/>
            <person name="FitzGerald L.M."/>
            <person name="Lee N."/>
            <person name="Adams M.D."/>
            <person name="Hickey E.K."/>
            <person name="Berg D.E."/>
            <person name="Gocayne J.D."/>
            <person name="Utterback T.R."/>
            <person name="Peterson J.D."/>
            <person name="Kelley J.M."/>
            <person name="Cotton M.D."/>
            <person name="Weidman J.F."/>
            <person name="Fujii C."/>
            <person name="Bowman C."/>
            <person name="Watthey L."/>
            <person name="Wallin E."/>
            <person name="Hayes W.S."/>
            <person name="Borodovsky M."/>
            <person name="Karp P.D."/>
            <person name="Smith H.O."/>
            <person name="Fraser C.M."/>
            <person name="Venter J.C."/>
        </authorList>
    </citation>
    <scope>NUCLEOTIDE SEQUENCE [LARGE SCALE GENOMIC DNA]</scope>
    <source>
        <strain>ATCC 700392 / 26695</strain>
    </source>
</reference>
<name>BCP_HELPY</name>
<proteinExistence type="inferred from homology"/>
<sequence>MEKLEVGQLAPDFRLKNSDGVEISLKDLLHKKVVLYFYPKDNTPGCTLEAKDFSALFSEFEKKNAVVVGISPDNAQSHQKFISQCSLNVILLCDEDKKAANLYKAYGKRMLYGKEHLGIIRSTFIINTQGVLEKCFYNVKAKGHAQKVLESL</sequence>
<comment type="function">
    <text evidence="1">Thiol-specific peroxidase that catalyzes the reduction of hydrogen peroxide and organic hydroperoxides to water and alcohols, respectively. Plays a role in cell protection against oxidative stress by detoxifying peroxides and as sensor of hydrogen peroxide-mediated signaling events.</text>
</comment>
<comment type="catalytic activity">
    <reaction evidence="1">
        <text>a hydroperoxide + [thioredoxin]-dithiol = an alcohol + [thioredoxin]-disulfide + H2O</text>
        <dbReference type="Rhea" id="RHEA:62620"/>
        <dbReference type="Rhea" id="RHEA-COMP:10698"/>
        <dbReference type="Rhea" id="RHEA-COMP:10700"/>
        <dbReference type="ChEBI" id="CHEBI:15377"/>
        <dbReference type="ChEBI" id="CHEBI:29950"/>
        <dbReference type="ChEBI" id="CHEBI:30879"/>
        <dbReference type="ChEBI" id="CHEBI:35924"/>
        <dbReference type="ChEBI" id="CHEBI:50058"/>
        <dbReference type="EC" id="1.11.1.24"/>
    </reaction>
</comment>
<comment type="subunit">
    <text evidence="1">Monomer.</text>
</comment>
<comment type="miscellaneous">
    <text evidence="2">The active site is a conserved redox-active cysteine residue, the peroxidatic cysteine (C(P)), which makes the nucleophilic attack on the peroxide substrate. The peroxide oxidizes the C(P)-SH to cysteine sulfenic acid (C(P)-SOH), which then reacts with another cysteine residue, the resolving cysteine (C(R)), to form a disulfide bridge. The disulfide is subsequently reduced by an appropriate electron donor to complete the catalytic cycle. In this atypical 2-Cys peroxiredoxin, C(R) is present in the same subunit to form an intramolecular disulfide. The disulfide is subsequently reduced by thioredoxin.</text>
</comment>
<comment type="similarity">
    <text evidence="4">Belongs to the peroxiredoxin family. BCP/PrxQ subfamily.</text>
</comment>
<dbReference type="EC" id="1.11.1.24" evidence="1"/>
<dbReference type="EMBL" id="AE000511">
    <property type="protein sequence ID" value="AAD07205.1"/>
    <property type="molecule type" value="Genomic_DNA"/>
</dbReference>
<dbReference type="PIR" id="H64536">
    <property type="entry name" value="H64536"/>
</dbReference>
<dbReference type="RefSeq" id="NP_206936.1">
    <property type="nucleotide sequence ID" value="NC_000915.1"/>
</dbReference>
<dbReference type="RefSeq" id="WP_000412947.1">
    <property type="nucleotide sequence ID" value="NC_018939.1"/>
</dbReference>
<dbReference type="SMR" id="P55979"/>
<dbReference type="DIP" id="DIP-3201N"/>
<dbReference type="FunCoup" id="P55979">
    <property type="interactions" value="374"/>
</dbReference>
<dbReference type="IntAct" id="P55979">
    <property type="interactions" value="21"/>
</dbReference>
<dbReference type="MINT" id="P55979"/>
<dbReference type="STRING" id="85962.HP_0136"/>
<dbReference type="PaxDb" id="85962-C694_00670"/>
<dbReference type="EnsemblBacteria" id="AAD07205">
    <property type="protein sequence ID" value="AAD07205"/>
    <property type="gene ID" value="HP_0136"/>
</dbReference>
<dbReference type="KEGG" id="heo:C694_00670"/>
<dbReference type="KEGG" id="hpy:HP_0136"/>
<dbReference type="PATRIC" id="fig|85962.47.peg.147"/>
<dbReference type="eggNOG" id="COG1225">
    <property type="taxonomic scope" value="Bacteria"/>
</dbReference>
<dbReference type="InParanoid" id="P55979"/>
<dbReference type="OrthoDB" id="9812811at2"/>
<dbReference type="PhylomeDB" id="P55979"/>
<dbReference type="Proteomes" id="UP000000429">
    <property type="component" value="Chromosome"/>
</dbReference>
<dbReference type="GO" id="GO:0005737">
    <property type="term" value="C:cytoplasm"/>
    <property type="evidence" value="ECO:0000318"/>
    <property type="project" value="GO_Central"/>
</dbReference>
<dbReference type="GO" id="GO:0008379">
    <property type="term" value="F:thioredoxin peroxidase activity"/>
    <property type="evidence" value="ECO:0000318"/>
    <property type="project" value="GO_Central"/>
</dbReference>
<dbReference type="GO" id="GO:0045454">
    <property type="term" value="P:cell redox homeostasis"/>
    <property type="evidence" value="ECO:0000318"/>
    <property type="project" value="GO_Central"/>
</dbReference>
<dbReference type="GO" id="GO:0034599">
    <property type="term" value="P:cellular response to oxidative stress"/>
    <property type="evidence" value="ECO:0000318"/>
    <property type="project" value="GO_Central"/>
</dbReference>
<dbReference type="CDD" id="cd03017">
    <property type="entry name" value="PRX_BCP"/>
    <property type="match status" value="1"/>
</dbReference>
<dbReference type="FunFam" id="3.40.30.10:FF:000007">
    <property type="entry name" value="Thioredoxin-dependent thiol peroxidase"/>
    <property type="match status" value="1"/>
</dbReference>
<dbReference type="Gene3D" id="3.40.30.10">
    <property type="entry name" value="Glutaredoxin"/>
    <property type="match status" value="1"/>
</dbReference>
<dbReference type="InterPro" id="IPR000866">
    <property type="entry name" value="AhpC/TSA"/>
</dbReference>
<dbReference type="InterPro" id="IPR024706">
    <property type="entry name" value="Peroxiredoxin_AhpC-typ"/>
</dbReference>
<dbReference type="InterPro" id="IPR050924">
    <property type="entry name" value="Peroxiredoxin_BCP/PrxQ"/>
</dbReference>
<dbReference type="InterPro" id="IPR036249">
    <property type="entry name" value="Thioredoxin-like_sf"/>
</dbReference>
<dbReference type="InterPro" id="IPR013766">
    <property type="entry name" value="Thioredoxin_domain"/>
</dbReference>
<dbReference type="PANTHER" id="PTHR42801:SF4">
    <property type="entry name" value="AHPC_TSA FAMILY PROTEIN"/>
    <property type="match status" value="1"/>
</dbReference>
<dbReference type="PANTHER" id="PTHR42801">
    <property type="entry name" value="THIOREDOXIN-DEPENDENT PEROXIDE REDUCTASE"/>
    <property type="match status" value="1"/>
</dbReference>
<dbReference type="Pfam" id="PF00578">
    <property type="entry name" value="AhpC-TSA"/>
    <property type="match status" value="1"/>
</dbReference>
<dbReference type="PIRSF" id="PIRSF000239">
    <property type="entry name" value="AHPC"/>
    <property type="match status" value="1"/>
</dbReference>
<dbReference type="SUPFAM" id="SSF52833">
    <property type="entry name" value="Thioredoxin-like"/>
    <property type="match status" value="1"/>
</dbReference>
<dbReference type="PROSITE" id="PS51352">
    <property type="entry name" value="THIOREDOXIN_2"/>
    <property type="match status" value="1"/>
</dbReference>
<protein>
    <recommendedName>
        <fullName>Putative peroxiredoxin bcp</fullName>
        <ecNumber evidence="1">1.11.1.24</ecNumber>
    </recommendedName>
    <alternativeName>
        <fullName>Bacterioferritin comigratory protein homolog</fullName>
    </alternativeName>
    <alternativeName>
        <fullName>Thioredoxin peroxidase</fullName>
    </alternativeName>
    <alternativeName>
        <fullName evidence="4">Thioredoxin-dependent peroxiredoxin Bcp</fullName>
    </alternativeName>
</protein>
<gene>
    <name type="primary">bcp</name>
    <name type="ordered locus">HP_0136</name>
</gene>
<feature type="chain" id="PRO_0000135138" description="Putative peroxiredoxin bcp">
    <location>
        <begin position="1"/>
        <end position="152"/>
    </location>
</feature>
<feature type="domain" description="Thioredoxin" evidence="3">
    <location>
        <begin position="4"/>
        <end position="152"/>
    </location>
</feature>
<feature type="active site" description="Cysteine sulfenic acid (-SOH) intermediate" evidence="2">
    <location>
        <position position="46"/>
    </location>
</feature>
<feature type="disulfide bond" description="Redox-active" evidence="2">
    <location>
        <begin position="46"/>
        <end position="85"/>
    </location>
</feature>
<keyword id="KW-0049">Antioxidant</keyword>
<keyword id="KW-1015">Disulfide bond</keyword>
<keyword id="KW-0560">Oxidoreductase</keyword>
<keyword id="KW-0575">Peroxidase</keyword>
<keyword id="KW-0676">Redox-active center</keyword>
<keyword id="KW-1185">Reference proteome</keyword>